<proteinExistence type="inferred from homology"/>
<gene>
    <name evidence="1" type="primary">rbfA</name>
    <name type="ordered locus">SACE_5924</name>
</gene>
<reference key="1">
    <citation type="journal article" date="2007" name="Nat. Biotechnol.">
        <title>Complete genome sequence of the erythromycin-producing bacterium Saccharopolyspora erythraea NRRL23338.</title>
        <authorList>
            <person name="Oliynyk M."/>
            <person name="Samborskyy M."/>
            <person name="Lester J.B."/>
            <person name="Mironenko T."/>
            <person name="Scott N."/>
            <person name="Dickens S."/>
            <person name="Haydock S.F."/>
            <person name="Leadlay P.F."/>
        </authorList>
    </citation>
    <scope>NUCLEOTIDE SEQUENCE [LARGE SCALE GENOMIC DNA]</scope>
    <source>
        <strain>ATCC 11635 / DSM 40517 / JCM 4748 / NBRC 13426 / NCIMB 8594 / NRRL 2338</strain>
    </source>
</reference>
<sequence>MADTARARRLAKRIAQIVASGLEYEVKDPRLAMVTITDARVTPDLRDATVYYTVFGDDADHASTAAALASATGVLRSRVGQQTGVRFTPTLTFVADTVPDDARRLDELLAQAREADAEVARLASTAEHAGDADPYRVDTEDDDDDTDGADAEARSDADVRRGPQSG</sequence>
<name>RBFA_SACEN</name>
<comment type="function">
    <text evidence="1">One of several proteins that assist in the late maturation steps of the functional core of the 30S ribosomal subunit. Associates with free 30S ribosomal subunits (but not with 30S subunits that are part of 70S ribosomes or polysomes). Required for efficient processing of 16S rRNA. May interact with the 5'-terminal helix region of 16S rRNA.</text>
</comment>
<comment type="subunit">
    <text evidence="1">Monomer. Binds 30S ribosomal subunits, but not 50S ribosomal subunits or 70S ribosomes.</text>
</comment>
<comment type="subcellular location">
    <subcellularLocation>
        <location evidence="1">Cytoplasm</location>
    </subcellularLocation>
</comment>
<comment type="similarity">
    <text evidence="1">Belongs to the RbfA family.</text>
</comment>
<organism>
    <name type="scientific">Saccharopolyspora erythraea (strain ATCC 11635 / DSM 40517 / JCM 4748 / NBRC 13426 / NCIMB 8594 / NRRL 2338)</name>
    <dbReference type="NCBI Taxonomy" id="405948"/>
    <lineage>
        <taxon>Bacteria</taxon>
        <taxon>Bacillati</taxon>
        <taxon>Actinomycetota</taxon>
        <taxon>Actinomycetes</taxon>
        <taxon>Pseudonocardiales</taxon>
        <taxon>Pseudonocardiaceae</taxon>
        <taxon>Saccharopolyspora</taxon>
    </lineage>
</organism>
<protein>
    <recommendedName>
        <fullName evidence="1">Ribosome-binding factor A</fullName>
    </recommendedName>
</protein>
<keyword id="KW-0963">Cytoplasm</keyword>
<keyword id="KW-1185">Reference proteome</keyword>
<keyword id="KW-0690">Ribosome biogenesis</keyword>
<dbReference type="EMBL" id="AM420293">
    <property type="protein sequence ID" value="CAM05107.1"/>
    <property type="molecule type" value="Genomic_DNA"/>
</dbReference>
<dbReference type="RefSeq" id="WP_009950435.1">
    <property type="nucleotide sequence ID" value="NC_009142.1"/>
</dbReference>
<dbReference type="SMR" id="A4FM32"/>
<dbReference type="STRING" id="405948.SACE_5924"/>
<dbReference type="KEGG" id="sen:SACE_5924"/>
<dbReference type="eggNOG" id="COG0858">
    <property type="taxonomic scope" value="Bacteria"/>
</dbReference>
<dbReference type="HOGENOM" id="CLU_089475_0_0_11"/>
<dbReference type="OrthoDB" id="307788at2"/>
<dbReference type="Proteomes" id="UP000006728">
    <property type="component" value="Chromosome"/>
</dbReference>
<dbReference type="GO" id="GO:0005829">
    <property type="term" value="C:cytosol"/>
    <property type="evidence" value="ECO:0007669"/>
    <property type="project" value="TreeGrafter"/>
</dbReference>
<dbReference type="GO" id="GO:0043024">
    <property type="term" value="F:ribosomal small subunit binding"/>
    <property type="evidence" value="ECO:0007669"/>
    <property type="project" value="TreeGrafter"/>
</dbReference>
<dbReference type="GO" id="GO:0030490">
    <property type="term" value="P:maturation of SSU-rRNA"/>
    <property type="evidence" value="ECO:0007669"/>
    <property type="project" value="UniProtKB-UniRule"/>
</dbReference>
<dbReference type="FunFam" id="3.30.300.20:FF:000018">
    <property type="entry name" value="Ribosome-binding factor A"/>
    <property type="match status" value="1"/>
</dbReference>
<dbReference type="Gene3D" id="3.30.300.20">
    <property type="match status" value="1"/>
</dbReference>
<dbReference type="HAMAP" id="MF_00003">
    <property type="entry name" value="RbfA"/>
    <property type="match status" value="1"/>
</dbReference>
<dbReference type="InterPro" id="IPR015946">
    <property type="entry name" value="KH_dom-like_a/b"/>
</dbReference>
<dbReference type="InterPro" id="IPR000238">
    <property type="entry name" value="RbfA"/>
</dbReference>
<dbReference type="InterPro" id="IPR023799">
    <property type="entry name" value="RbfA_dom_sf"/>
</dbReference>
<dbReference type="InterPro" id="IPR020053">
    <property type="entry name" value="Ribosome-bd_factorA_CS"/>
</dbReference>
<dbReference type="NCBIfam" id="TIGR00082">
    <property type="entry name" value="rbfA"/>
    <property type="match status" value="1"/>
</dbReference>
<dbReference type="PANTHER" id="PTHR33515">
    <property type="entry name" value="RIBOSOME-BINDING FACTOR A, CHLOROPLASTIC-RELATED"/>
    <property type="match status" value="1"/>
</dbReference>
<dbReference type="PANTHER" id="PTHR33515:SF1">
    <property type="entry name" value="RIBOSOME-BINDING FACTOR A, CHLOROPLASTIC-RELATED"/>
    <property type="match status" value="1"/>
</dbReference>
<dbReference type="Pfam" id="PF02033">
    <property type="entry name" value="RBFA"/>
    <property type="match status" value="1"/>
</dbReference>
<dbReference type="SUPFAM" id="SSF89919">
    <property type="entry name" value="Ribosome-binding factor A, RbfA"/>
    <property type="match status" value="1"/>
</dbReference>
<dbReference type="PROSITE" id="PS01319">
    <property type="entry name" value="RBFA"/>
    <property type="match status" value="1"/>
</dbReference>
<feature type="chain" id="PRO_1000000197" description="Ribosome-binding factor A">
    <location>
        <begin position="1"/>
        <end position="166"/>
    </location>
</feature>
<feature type="region of interest" description="Disordered" evidence="2">
    <location>
        <begin position="122"/>
        <end position="166"/>
    </location>
</feature>
<feature type="compositionally biased region" description="Basic and acidic residues" evidence="2">
    <location>
        <begin position="128"/>
        <end position="138"/>
    </location>
</feature>
<feature type="compositionally biased region" description="Acidic residues" evidence="2">
    <location>
        <begin position="139"/>
        <end position="150"/>
    </location>
</feature>
<feature type="compositionally biased region" description="Basic and acidic residues" evidence="2">
    <location>
        <begin position="151"/>
        <end position="166"/>
    </location>
</feature>
<accession>A4FM32</accession>
<evidence type="ECO:0000255" key="1">
    <source>
        <dbReference type="HAMAP-Rule" id="MF_00003"/>
    </source>
</evidence>
<evidence type="ECO:0000256" key="2">
    <source>
        <dbReference type="SAM" id="MobiDB-lite"/>
    </source>
</evidence>